<comment type="function">
    <text evidence="2">Component of the ubiquinol-cytochrome c oxidoreductase, a multisubunit transmembrane complex that is part of the mitochondrial electron transport chain which drives oxidative phosphorylation. The respiratory chain contains 3 multisubunit complexes succinate dehydrogenase (complex II, CII), ubiquinol-cytochrome c oxidoreductase (cytochrome b-c1 complex, complex III, CIII) and cytochrome c oxidase (complex IV, CIV), that cooperate to transfer electrons derived from NADH and succinate to molecular oxygen, creating an electrochemical gradient over the inner membrane that drives transmembrane transport and the ATP synthase. The cytochrome b-c1 complex catalyzes electron transfer from ubiquinol to cytochrome c, linking this redox reaction to translocation of protons across the mitochondrial inner membrane, with protons being carried across the membrane as hydrogens on the quinol. In the process called Q cycle, 2 protons are consumed from the matrix, 4 protons are released into the intermembrane space and 2 electrons are passed to cytochrome c.</text>
</comment>
<comment type="subunit">
    <text evidence="2">Component of the ubiquinol-cytochrome c oxidoreductase (cytochrome b-c1 complex, complex III, CIII), a multisubunit enzyme composed of 3 respiratory subunits cytochrome b, cytochrome c1 and Rieske protein, 2 core protein subunits, and additional low-molecular weight protein subunits. The complex exists as an obligatory dimer and forms supercomplexes (SCs) in the inner mitochondrial membrane with cytochrome c oxidase (complex IV, CIV).</text>
</comment>
<comment type="subcellular location">
    <subcellularLocation>
        <location evidence="2">Mitochondrion inner membrane</location>
        <topology evidence="2">Peripheral membrane protein</topology>
        <orientation evidence="2">Intermembrane side</orientation>
    </subcellularLocation>
</comment>
<comment type="similarity">
    <text evidence="3">Belongs to the UQCRH/QCR6 family.</text>
</comment>
<accession>Q1ZXP3</accession>
<keyword id="KW-1015">Disulfide bond</keyword>
<keyword id="KW-0249">Electron transport</keyword>
<keyword id="KW-0472">Membrane</keyword>
<keyword id="KW-0496">Mitochondrion</keyword>
<keyword id="KW-0999">Mitochondrion inner membrane</keyword>
<keyword id="KW-1185">Reference proteome</keyword>
<keyword id="KW-0679">Respiratory chain</keyword>
<keyword id="KW-0813">Transport</keyword>
<feature type="chain" id="PRO_0000327639" description="Probable cytochrome b-c1 complex subunit 6">
    <location>
        <begin position="1"/>
        <end position="69"/>
    </location>
</feature>
<feature type="disulfide bond" evidence="1">
    <location>
        <begin position="16"/>
        <end position="59"/>
    </location>
</feature>
<feature type="disulfide bond" evidence="2">
    <location>
        <begin position="30"/>
        <end position="45"/>
    </location>
</feature>
<dbReference type="EMBL" id="AAFI02000006">
    <property type="protein sequence ID" value="EAS66929.1"/>
    <property type="molecule type" value="Genomic_DNA"/>
</dbReference>
<dbReference type="RefSeq" id="XP_001134613.1">
    <property type="nucleotide sequence ID" value="XM_001134613.1"/>
</dbReference>
<dbReference type="SMR" id="Q1ZXP3"/>
<dbReference type="FunCoup" id="Q1ZXP3">
    <property type="interactions" value="7"/>
</dbReference>
<dbReference type="STRING" id="44689.Q1ZXP3"/>
<dbReference type="PaxDb" id="44689-DDB0233077"/>
<dbReference type="EnsemblProtists" id="EAS66929">
    <property type="protein sequence ID" value="EAS66929"/>
    <property type="gene ID" value="DDB_G0271774"/>
</dbReference>
<dbReference type="GeneID" id="8618155"/>
<dbReference type="KEGG" id="ddi:DDB_G0271774"/>
<dbReference type="dictyBase" id="DDB_G0271774">
    <property type="gene designation" value="uqcrh"/>
</dbReference>
<dbReference type="VEuPathDB" id="AmoebaDB:DDB_G0271774"/>
<dbReference type="eggNOG" id="ENOG502RIAM">
    <property type="taxonomic scope" value="Eukaryota"/>
</dbReference>
<dbReference type="HOGENOM" id="CLU_115913_2_1_1"/>
<dbReference type="InParanoid" id="Q1ZXP3"/>
<dbReference type="OMA" id="ACDGQYF"/>
<dbReference type="PhylomeDB" id="Q1ZXP3"/>
<dbReference type="Reactome" id="R-DDI-611105">
    <property type="pathway name" value="Respiratory electron transport"/>
</dbReference>
<dbReference type="PRO" id="PR:Q1ZXP3"/>
<dbReference type="Proteomes" id="UP000002195">
    <property type="component" value="Chromosome 2"/>
</dbReference>
<dbReference type="GO" id="GO:0005743">
    <property type="term" value="C:mitochondrial inner membrane"/>
    <property type="evidence" value="ECO:0007669"/>
    <property type="project" value="UniProtKB-SubCell"/>
</dbReference>
<dbReference type="GO" id="GO:0045275">
    <property type="term" value="C:respiratory chain complex III"/>
    <property type="evidence" value="ECO:0000318"/>
    <property type="project" value="GO_Central"/>
</dbReference>
<dbReference type="GO" id="GO:0006122">
    <property type="term" value="P:mitochondrial electron transport, ubiquinol to cytochrome c"/>
    <property type="evidence" value="ECO:0000318"/>
    <property type="project" value="GO_Central"/>
</dbReference>
<dbReference type="FunFam" id="1.10.287.20:FF:000001">
    <property type="entry name" value="Cytochrome b-c1 complex subunit 6"/>
    <property type="match status" value="1"/>
</dbReference>
<dbReference type="Gene3D" id="1.10.287.20">
    <property type="entry name" value="Ubiquinol-cytochrome C reductase hinge domain"/>
    <property type="match status" value="1"/>
</dbReference>
<dbReference type="InterPro" id="IPR003422">
    <property type="entry name" value="Cyt_b-c1_6"/>
</dbReference>
<dbReference type="InterPro" id="IPR023184">
    <property type="entry name" value="Ubol_cytC_Rdtase_hinge_dom"/>
</dbReference>
<dbReference type="InterPro" id="IPR036811">
    <property type="entry name" value="Ubol_cytC_Rdtase_hinge_dom_sf"/>
</dbReference>
<dbReference type="PANTHER" id="PTHR15336:SF0">
    <property type="entry name" value="CYTOCHROME B-C1 COMPLEX SUBUNIT 6, MITOCHONDRIAL"/>
    <property type="match status" value="1"/>
</dbReference>
<dbReference type="PANTHER" id="PTHR15336">
    <property type="entry name" value="UBIQUINOL-CYTOCHROME C REDUCTASE COMPLEX 7.8 KDA PROTEIN"/>
    <property type="match status" value="1"/>
</dbReference>
<dbReference type="Pfam" id="PF02320">
    <property type="entry name" value="UCR_hinge"/>
    <property type="match status" value="1"/>
</dbReference>
<dbReference type="SUPFAM" id="SSF81531">
    <property type="entry name" value="Non-heme 11 kDa protein of cytochrome bc1 complex (Ubiquinol-cytochrome c reductase)"/>
    <property type="match status" value="1"/>
</dbReference>
<name>QCR6_DICDI</name>
<proteinExistence type="inferred from homology"/>
<sequence>MQTSECKVKGPIQEGCASGCEKSWSAYQACSGRVAKLEHDEKANCLGQFLEHVQCIDKCVGPKLFAQLK</sequence>
<evidence type="ECO:0000250" key="1">
    <source>
        <dbReference type="UniProtKB" id="P00126"/>
    </source>
</evidence>
<evidence type="ECO:0000250" key="2">
    <source>
        <dbReference type="UniProtKB" id="P00127"/>
    </source>
</evidence>
<evidence type="ECO:0000305" key="3"/>
<protein>
    <recommendedName>
        <fullName>Probable cytochrome b-c1 complex subunit 6</fullName>
    </recommendedName>
    <alternativeName>
        <fullName>Ubiquinol-cytochrome c reductase complex subunit 6</fullName>
    </alternativeName>
</protein>
<gene>
    <name type="primary">uqcrh</name>
    <name type="ORF">DDB_G0271774</name>
</gene>
<organism>
    <name type="scientific">Dictyostelium discoideum</name>
    <name type="common">Social amoeba</name>
    <dbReference type="NCBI Taxonomy" id="44689"/>
    <lineage>
        <taxon>Eukaryota</taxon>
        <taxon>Amoebozoa</taxon>
        <taxon>Evosea</taxon>
        <taxon>Eumycetozoa</taxon>
        <taxon>Dictyostelia</taxon>
        <taxon>Dictyosteliales</taxon>
        <taxon>Dictyosteliaceae</taxon>
        <taxon>Dictyostelium</taxon>
    </lineage>
</organism>
<reference key="1">
    <citation type="journal article" date="2002" name="Nature">
        <title>Sequence and analysis of chromosome 2 of Dictyostelium discoideum.</title>
        <authorList>
            <person name="Gloeckner G."/>
            <person name="Eichinger L."/>
            <person name="Szafranski K."/>
            <person name="Pachebat J.A."/>
            <person name="Bankier A.T."/>
            <person name="Dear P.H."/>
            <person name="Lehmann R."/>
            <person name="Baumgart C."/>
            <person name="Parra G."/>
            <person name="Abril J.F."/>
            <person name="Guigo R."/>
            <person name="Kumpf K."/>
            <person name="Tunggal B."/>
            <person name="Cox E.C."/>
            <person name="Quail M.A."/>
            <person name="Platzer M."/>
            <person name="Rosenthal A."/>
            <person name="Noegel A.A."/>
        </authorList>
    </citation>
    <scope>NUCLEOTIDE SEQUENCE [LARGE SCALE GENOMIC DNA]</scope>
    <source>
        <strain>AX4</strain>
    </source>
</reference>
<reference key="2">
    <citation type="journal article" date="2005" name="Nature">
        <title>The genome of the social amoeba Dictyostelium discoideum.</title>
        <authorList>
            <person name="Eichinger L."/>
            <person name="Pachebat J.A."/>
            <person name="Gloeckner G."/>
            <person name="Rajandream M.A."/>
            <person name="Sucgang R."/>
            <person name="Berriman M."/>
            <person name="Song J."/>
            <person name="Olsen R."/>
            <person name="Szafranski K."/>
            <person name="Xu Q."/>
            <person name="Tunggal B."/>
            <person name="Kummerfeld S."/>
            <person name="Madera M."/>
            <person name="Konfortov B.A."/>
            <person name="Rivero F."/>
            <person name="Bankier A.T."/>
            <person name="Lehmann R."/>
            <person name="Hamlin N."/>
            <person name="Davies R."/>
            <person name="Gaudet P."/>
            <person name="Fey P."/>
            <person name="Pilcher K."/>
            <person name="Chen G."/>
            <person name="Saunders D."/>
            <person name="Sodergren E.J."/>
            <person name="Davis P."/>
            <person name="Kerhornou A."/>
            <person name="Nie X."/>
            <person name="Hall N."/>
            <person name="Anjard C."/>
            <person name="Hemphill L."/>
            <person name="Bason N."/>
            <person name="Farbrother P."/>
            <person name="Desany B."/>
            <person name="Just E."/>
            <person name="Morio T."/>
            <person name="Rost R."/>
            <person name="Churcher C.M."/>
            <person name="Cooper J."/>
            <person name="Haydock S."/>
            <person name="van Driessche N."/>
            <person name="Cronin A."/>
            <person name="Goodhead I."/>
            <person name="Muzny D.M."/>
            <person name="Mourier T."/>
            <person name="Pain A."/>
            <person name="Lu M."/>
            <person name="Harper D."/>
            <person name="Lindsay R."/>
            <person name="Hauser H."/>
            <person name="James K.D."/>
            <person name="Quiles M."/>
            <person name="Madan Babu M."/>
            <person name="Saito T."/>
            <person name="Buchrieser C."/>
            <person name="Wardroper A."/>
            <person name="Felder M."/>
            <person name="Thangavelu M."/>
            <person name="Johnson D."/>
            <person name="Knights A."/>
            <person name="Loulseged H."/>
            <person name="Mungall K.L."/>
            <person name="Oliver K."/>
            <person name="Price C."/>
            <person name="Quail M.A."/>
            <person name="Urushihara H."/>
            <person name="Hernandez J."/>
            <person name="Rabbinowitsch E."/>
            <person name="Steffen D."/>
            <person name="Sanders M."/>
            <person name="Ma J."/>
            <person name="Kohara Y."/>
            <person name="Sharp S."/>
            <person name="Simmonds M.N."/>
            <person name="Spiegler S."/>
            <person name="Tivey A."/>
            <person name="Sugano S."/>
            <person name="White B."/>
            <person name="Walker D."/>
            <person name="Woodward J.R."/>
            <person name="Winckler T."/>
            <person name="Tanaka Y."/>
            <person name="Shaulsky G."/>
            <person name="Schleicher M."/>
            <person name="Weinstock G.M."/>
            <person name="Rosenthal A."/>
            <person name="Cox E.C."/>
            <person name="Chisholm R.L."/>
            <person name="Gibbs R.A."/>
            <person name="Loomis W.F."/>
            <person name="Platzer M."/>
            <person name="Kay R.R."/>
            <person name="Williams J.G."/>
            <person name="Dear P.H."/>
            <person name="Noegel A.A."/>
            <person name="Barrell B.G."/>
            <person name="Kuspa A."/>
        </authorList>
    </citation>
    <scope>NUCLEOTIDE SEQUENCE [LARGE SCALE GENOMIC DNA]</scope>
    <source>
        <strain>AX4</strain>
    </source>
</reference>